<accession>P55550</accession>
<gene>
    <name type="ordered locus">NGR_a02650</name>
    <name type="ORF">y4lJ</name>
</gene>
<evidence type="ECO:0000256" key="1">
    <source>
        <dbReference type="SAM" id="MobiDB-lite"/>
    </source>
</evidence>
<name>Y4LJ_SINFN</name>
<geneLocation type="plasmid">
    <name>sym pNGR234a</name>
</geneLocation>
<sequence length="167" mass="18146">MPLRRCRAWRGHSQPGTGSRSNEIPKHRNVVAFLDDFSHVVCRGPTEQRVIIAAVGKLVDRIAQTGKVAGDQVAVFVATERFKQVKPSDQAGLRDADGLEQAGKLAVDVLQLELLDWLTESINGGSDFCLIILKIGEVDPMALILAKFVDSASPLKPAVLIHRAPAF</sequence>
<organism>
    <name type="scientific">Sinorhizobium fredii (strain NBRC 101917 / NGR234)</name>
    <dbReference type="NCBI Taxonomy" id="394"/>
    <lineage>
        <taxon>Bacteria</taxon>
        <taxon>Pseudomonadati</taxon>
        <taxon>Pseudomonadota</taxon>
        <taxon>Alphaproteobacteria</taxon>
        <taxon>Hyphomicrobiales</taxon>
        <taxon>Rhizobiaceae</taxon>
        <taxon>Sinorhizobium/Ensifer group</taxon>
        <taxon>Sinorhizobium</taxon>
    </lineage>
</organism>
<feature type="chain" id="PRO_0000200904" description="Uncharacterized protein y4lJ">
    <location>
        <begin position="1"/>
        <end position="167"/>
    </location>
</feature>
<feature type="region of interest" description="Disordered" evidence="1">
    <location>
        <begin position="1"/>
        <end position="23"/>
    </location>
</feature>
<feature type="compositionally biased region" description="Basic residues" evidence="1">
    <location>
        <begin position="1"/>
        <end position="10"/>
    </location>
</feature>
<reference key="1">
    <citation type="journal article" date="1997" name="Nature">
        <title>Molecular basis of symbiosis between Rhizobium and legumes.</title>
        <authorList>
            <person name="Freiberg C.A."/>
            <person name="Fellay R."/>
            <person name="Bairoch A."/>
            <person name="Broughton W.J."/>
            <person name="Rosenthal A."/>
            <person name="Perret X."/>
        </authorList>
    </citation>
    <scope>NUCLEOTIDE SEQUENCE [LARGE SCALE GENOMIC DNA]</scope>
    <source>
        <strain>NBRC 101917 / NGR234</strain>
    </source>
</reference>
<reference key="2">
    <citation type="journal article" date="2009" name="Appl. Environ. Microbiol.">
        <title>Rhizobium sp. strain NGR234 possesses a remarkable number of secretion systems.</title>
        <authorList>
            <person name="Schmeisser C."/>
            <person name="Liesegang H."/>
            <person name="Krysciak D."/>
            <person name="Bakkou N."/>
            <person name="Le Quere A."/>
            <person name="Wollherr A."/>
            <person name="Heinemeyer I."/>
            <person name="Morgenstern B."/>
            <person name="Pommerening-Roeser A."/>
            <person name="Flores M."/>
            <person name="Palacios R."/>
            <person name="Brenner S."/>
            <person name="Gottschalk G."/>
            <person name="Schmitz R.A."/>
            <person name="Broughton W.J."/>
            <person name="Perret X."/>
            <person name="Strittmatter A.W."/>
            <person name="Streit W.R."/>
        </authorList>
    </citation>
    <scope>NUCLEOTIDE SEQUENCE [LARGE SCALE GENOMIC DNA]</scope>
    <source>
        <strain>NBRC 101917 / NGR234</strain>
    </source>
</reference>
<protein>
    <recommendedName>
        <fullName>Uncharacterized protein y4lJ</fullName>
    </recommendedName>
</protein>
<proteinExistence type="predicted"/>
<keyword id="KW-0614">Plasmid</keyword>
<keyword id="KW-1185">Reference proteome</keyword>
<dbReference type="EMBL" id="U00090">
    <property type="protein sequence ID" value="AAB91762.1"/>
    <property type="molecule type" value="Genomic_DNA"/>
</dbReference>
<dbReference type="RefSeq" id="NP_443960.1">
    <property type="nucleotide sequence ID" value="NC_000914.2"/>
</dbReference>
<dbReference type="KEGG" id="rhi:NGR_a02650"/>
<dbReference type="HOGENOM" id="CLU_1593248_0_0_5"/>
<dbReference type="Proteomes" id="UP000001054">
    <property type="component" value="Plasmid pNGR234a"/>
</dbReference>